<organism>
    <name type="scientific">Salmonella typhi</name>
    <dbReference type="NCBI Taxonomy" id="90370"/>
    <lineage>
        <taxon>Bacteria</taxon>
        <taxon>Pseudomonadati</taxon>
        <taxon>Pseudomonadota</taxon>
        <taxon>Gammaproteobacteria</taxon>
        <taxon>Enterobacterales</taxon>
        <taxon>Enterobacteriaceae</taxon>
        <taxon>Salmonella</taxon>
    </lineage>
</organism>
<accession>P0A1S9</accession>
<accession>P40777</accession>
<evidence type="ECO:0000305" key="1"/>
<sequence>MAIIPKNYARLESGYREKALKLFPWVCGRCSREFVYSNLRELTVHHIDHDHTNNPEDGSNWELLCLYCHDHEHSKYTEADQYGSTVIAGEDAQKDVGEATYNPFADLKAMMNKKK</sequence>
<protein>
    <recommendedName>
        <fullName>Putative HNH nuclease YajD</fullName>
        <ecNumber>3.1.-.-</ecNumber>
    </recommendedName>
</protein>
<gene>
    <name type="primary">yajD</name>
    <name type="ordered locus">STY0449</name>
    <name type="ordered locus">t2452</name>
</gene>
<dbReference type="EC" id="3.1.-.-"/>
<dbReference type="EMBL" id="AL513382">
    <property type="protein sequence ID" value="CAD08867.1"/>
    <property type="molecule type" value="Genomic_DNA"/>
</dbReference>
<dbReference type="EMBL" id="AE014613">
    <property type="protein sequence ID" value="AAO70042.1"/>
    <property type="molecule type" value="Genomic_DNA"/>
</dbReference>
<dbReference type="RefSeq" id="NP_455006.1">
    <property type="nucleotide sequence ID" value="NC_003198.1"/>
</dbReference>
<dbReference type="RefSeq" id="WP_000974818.1">
    <property type="nucleotide sequence ID" value="NZ_WSUR01000026.1"/>
</dbReference>
<dbReference type="STRING" id="220341.gene:17584472"/>
<dbReference type="KEGG" id="stt:t2452"/>
<dbReference type="KEGG" id="sty:STY0449"/>
<dbReference type="PATRIC" id="fig|220341.7.peg.447"/>
<dbReference type="eggNOG" id="COG1403">
    <property type="taxonomic scope" value="Bacteria"/>
</dbReference>
<dbReference type="HOGENOM" id="CLU_136125_1_0_6"/>
<dbReference type="OMA" id="CHDNEHA"/>
<dbReference type="OrthoDB" id="9796565at2"/>
<dbReference type="Proteomes" id="UP000000541">
    <property type="component" value="Chromosome"/>
</dbReference>
<dbReference type="Proteomes" id="UP000002670">
    <property type="component" value="Chromosome"/>
</dbReference>
<dbReference type="GO" id="GO:0005829">
    <property type="term" value="C:cytosol"/>
    <property type="evidence" value="ECO:0007669"/>
    <property type="project" value="TreeGrafter"/>
</dbReference>
<dbReference type="GO" id="GO:0004519">
    <property type="term" value="F:endonuclease activity"/>
    <property type="evidence" value="ECO:0007669"/>
    <property type="project" value="InterPro"/>
</dbReference>
<dbReference type="GO" id="GO:0003676">
    <property type="term" value="F:nucleic acid binding"/>
    <property type="evidence" value="ECO:0007669"/>
    <property type="project" value="InterPro"/>
</dbReference>
<dbReference type="GO" id="GO:0008270">
    <property type="term" value="F:zinc ion binding"/>
    <property type="evidence" value="ECO:0007669"/>
    <property type="project" value="InterPro"/>
</dbReference>
<dbReference type="CDD" id="cd00085">
    <property type="entry name" value="HNHc"/>
    <property type="match status" value="1"/>
</dbReference>
<dbReference type="Gene3D" id="1.10.30.50">
    <property type="match status" value="1"/>
</dbReference>
<dbReference type="InterPro" id="IPR002711">
    <property type="entry name" value="HNH"/>
</dbReference>
<dbReference type="InterPro" id="IPR003615">
    <property type="entry name" value="HNH_nuc"/>
</dbReference>
<dbReference type="NCBIfam" id="NF008448">
    <property type="entry name" value="PRK11295.1"/>
    <property type="match status" value="1"/>
</dbReference>
<dbReference type="PANTHER" id="PTHR41286">
    <property type="entry name" value="HNH NUCLEASE YAJD-RELATED"/>
    <property type="match status" value="1"/>
</dbReference>
<dbReference type="PANTHER" id="PTHR41286:SF1">
    <property type="entry name" value="HNH NUCLEASE YAJD-RELATED"/>
    <property type="match status" value="1"/>
</dbReference>
<dbReference type="Pfam" id="PF01844">
    <property type="entry name" value="HNH"/>
    <property type="match status" value="1"/>
</dbReference>
<dbReference type="SMART" id="SM00507">
    <property type="entry name" value="HNHc"/>
    <property type="match status" value="1"/>
</dbReference>
<reference key="1">
    <citation type="journal article" date="2001" name="Nature">
        <title>Complete genome sequence of a multiple drug resistant Salmonella enterica serovar Typhi CT18.</title>
        <authorList>
            <person name="Parkhill J."/>
            <person name="Dougan G."/>
            <person name="James K.D."/>
            <person name="Thomson N.R."/>
            <person name="Pickard D."/>
            <person name="Wain J."/>
            <person name="Churcher C.M."/>
            <person name="Mungall K.L."/>
            <person name="Bentley S.D."/>
            <person name="Holden M.T.G."/>
            <person name="Sebaihia M."/>
            <person name="Baker S."/>
            <person name="Basham D."/>
            <person name="Brooks K."/>
            <person name="Chillingworth T."/>
            <person name="Connerton P."/>
            <person name="Cronin A."/>
            <person name="Davis P."/>
            <person name="Davies R.M."/>
            <person name="Dowd L."/>
            <person name="White N."/>
            <person name="Farrar J."/>
            <person name="Feltwell T."/>
            <person name="Hamlin N."/>
            <person name="Haque A."/>
            <person name="Hien T.T."/>
            <person name="Holroyd S."/>
            <person name="Jagels K."/>
            <person name="Krogh A."/>
            <person name="Larsen T.S."/>
            <person name="Leather S."/>
            <person name="Moule S."/>
            <person name="O'Gaora P."/>
            <person name="Parry C."/>
            <person name="Quail M.A."/>
            <person name="Rutherford K.M."/>
            <person name="Simmonds M."/>
            <person name="Skelton J."/>
            <person name="Stevens K."/>
            <person name="Whitehead S."/>
            <person name="Barrell B.G."/>
        </authorList>
    </citation>
    <scope>NUCLEOTIDE SEQUENCE [LARGE SCALE GENOMIC DNA]</scope>
    <source>
        <strain>CT18</strain>
    </source>
</reference>
<reference key="2">
    <citation type="journal article" date="2003" name="J. Bacteriol.">
        <title>Comparative genomics of Salmonella enterica serovar Typhi strains Ty2 and CT18.</title>
        <authorList>
            <person name="Deng W."/>
            <person name="Liou S.-R."/>
            <person name="Plunkett G. III"/>
            <person name="Mayhew G.F."/>
            <person name="Rose D.J."/>
            <person name="Burland V."/>
            <person name="Kodoyianni V."/>
            <person name="Schwartz D.C."/>
            <person name="Blattner F.R."/>
        </authorList>
    </citation>
    <scope>NUCLEOTIDE SEQUENCE [LARGE SCALE GENOMIC DNA]</scope>
    <source>
        <strain>ATCC 700931 / Ty2</strain>
    </source>
</reference>
<feature type="chain" id="PRO_0000168610" description="Putative HNH nuclease YajD">
    <location>
        <begin position="1"/>
        <end position="115"/>
    </location>
</feature>
<feature type="domain" description="HNH">
    <location>
        <begin position="27"/>
        <end position="75"/>
    </location>
</feature>
<keyword id="KW-0378">Hydrolase</keyword>
<keyword id="KW-0540">Nuclease</keyword>
<name>YAJD_SALTI</name>
<comment type="similarity">
    <text evidence="1">Belongs to the HNH nuclease family.</text>
</comment>
<proteinExistence type="inferred from homology"/>